<accession>Q8GW44</accession>
<accession>F4J114</accession>
<accession>Q8LEG9</accession>
<accession>Q9LY67</accession>
<sequence>MSNVTVCARFRPRSSKEMRDPSRDGVCARPIDAETFVFQDDKEDEFTFSLDRVFYEDSTQAAVYEFLALPIMRDAVNGINGTIITYGQTGAGKTYSMEGPGIQDCDEHNKGLLPRVVHGMFEQISSSNDIARYTVKLSMVEIYMEKVRDLLDLSKANIQIKENKTQGILLSGVTEVPVSDSVEALQHLCTGLANRAVGETQMNMSSSRSHCAYLFTIQQDSVKDKRVKTGKLILVDLAGSEKADKTGAEGRVLEEAKTINKSLSALGNVINALTSGPSSKGNHIPYRDSKLTRILQDALGGNSRMALLCCCSPSTLNASETLSTLRFGMRAKHIKASPRASEVKSAKAQEEPSSVTKDEKCGRILEKMKERMSNEDIKMLEDVFIQEGIIFSLDSMAEVETVYEDIVSKTIQSLQQAVDELQQKVKKLEAENIGIQEQALRNHEPGSVGKMSRFISSWYASFFTS</sequence>
<evidence type="ECO:0000255" key="1"/>
<evidence type="ECO:0000255" key="2">
    <source>
        <dbReference type="PROSITE-ProRule" id="PRU00283"/>
    </source>
</evidence>
<evidence type="ECO:0000256" key="3">
    <source>
        <dbReference type="SAM" id="MobiDB-lite"/>
    </source>
</evidence>
<evidence type="ECO:0000269" key="4">
    <source>
    </source>
</evidence>
<evidence type="ECO:0000269" key="5">
    <source>
    </source>
</evidence>
<evidence type="ECO:0000303" key="6">
    <source>
    </source>
</evidence>
<evidence type="ECO:0000303" key="7">
    <source>
    </source>
</evidence>
<evidence type="ECO:0000303" key="8">
    <source>
    </source>
</evidence>
<evidence type="ECO:0000305" key="9"/>
<evidence type="ECO:0000312" key="10">
    <source>
        <dbReference type="Araport" id="AT3G63480"/>
    </source>
</evidence>
<evidence type="ECO:0000312" key="11">
    <source>
        <dbReference type="EMBL" id="CAB87801.1"/>
    </source>
</evidence>
<feature type="chain" id="PRO_0000436184" description="Kinesin-like protein KIN-1">
    <location>
        <begin position="1"/>
        <end position="465"/>
    </location>
</feature>
<feature type="domain" description="Kinesin motor" evidence="2">
    <location>
        <begin position="3"/>
        <end position="334"/>
    </location>
</feature>
<feature type="region of interest" description="Disordered" evidence="3">
    <location>
        <begin position="338"/>
        <end position="358"/>
    </location>
</feature>
<feature type="coiled-coil region" evidence="1">
    <location>
        <begin position="402"/>
        <end position="444"/>
    </location>
</feature>
<feature type="compositionally biased region" description="Basic and acidic residues" evidence="3">
    <location>
        <begin position="341"/>
        <end position="358"/>
    </location>
</feature>
<feature type="binding site" evidence="2">
    <location>
        <begin position="87"/>
        <end position="94"/>
    </location>
    <ligand>
        <name>ATP</name>
        <dbReference type="ChEBI" id="CHEBI:30616"/>
    </ligand>
</feature>
<feature type="splice variant" id="VSP_058305" description="In isoform 2." evidence="9">
    <original>E</original>
    <variation>EASFI</variation>
    <location>
        <position position="175"/>
    </location>
</feature>
<feature type="sequence conflict" description="In Ref. 5; AAM62646." evidence="9" ref="5">
    <original>IQQ</original>
    <variation>VQE</variation>
    <location>
        <begin position="217"/>
        <end position="219"/>
    </location>
</feature>
<feature type="sequence conflict" description="In Ref. 5; AAM62646." evidence="9" ref="5">
    <original>S</original>
    <variation>P</variation>
    <location>
        <position position="461"/>
    </location>
</feature>
<comment type="function">
    <text evidence="4 5">Kinesin-like motor protein that promotes synapsis and is required for proper crossover distribution in meiosis (PubMed:25330379). Plays a role in the nuclear division cycles during megagametogenesis (PubMed:24667993).</text>
</comment>
<comment type="subunit">
    <text evidence="5">Homodimer. Interacts with WIP1 and WIP2.</text>
</comment>
<comment type="alternative products">
    <event type="alternative splicing"/>
    <isoform>
        <id>Q8GW44-1</id>
        <name>1</name>
        <sequence type="displayed"/>
    </isoform>
    <isoform>
        <id>Q8GW44-2</id>
        <name>2</name>
        <sequence type="described" ref="VSP_058305"/>
    </isoform>
</comment>
<comment type="tissue specificity">
    <text evidence="4">Specifically expressed in ovules and anthers.</text>
</comment>
<comment type="disruption phenotype">
    <text evidence="4 5">Partial seed abortion due to defects in megagametogenesis (PubMed:24667993, PubMed:25330379). Defects in pollen viability (PubMed:25330379).</text>
</comment>
<comment type="similarity">
    <text evidence="6">Belongs to the TRAFAC class myosin-kinesin ATPase superfamily. Kinesin family. KIN-1 subfamily.</text>
</comment>
<comment type="sequence caution" evidence="9">
    <conflict type="erroneous gene model prediction">
        <sequence resource="EMBL-CDS" id="CAB87801"/>
    </conflict>
</comment>
<reference key="1">
    <citation type="journal article" date="2000" name="Nature">
        <title>Sequence and analysis of chromosome 3 of the plant Arabidopsis thaliana.</title>
        <authorList>
            <person name="Salanoubat M."/>
            <person name="Lemcke K."/>
            <person name="Rieger M."/>
            <person name="Ansorge W."/>
            <person name="Unseld M."/>
            <person name="Fartmann B."/>
            <person name="Valle G."/>
            <person name="Bloecker H."/>
            <person name="Perez-Alonso M."/>
            <person name="Obermaier B."/>
            <person name="Delseny M."/>
            <person name="Boutry M."/>
            <person name="Grivell L.A."/>
            <person name="Mache R."/>
            <person name="Puigdomenech P."/>
            <person name="De Simone V."/>
            <person name="Choisne N."/>
            <person name="Artiguenave F."/>
            <person name="Robert C."/>
            <person name="Brottier P."/>
            <person name="Wincker P."/>
            <person name="Cattolico L."/>
            <person name="Weissenbach J."/>
            <person name="Saurin W."/>
            <person name="Quetier F."/>
            <person name="Schaefer M."/>
            <person name="Mueller-Auer S."/>
            <person name="Gabel C."/>
            <person name="Fuchs M."/>
            <person name="Benes V."/>
            <person name="Wurmbach E."/>
            <person name="Drzonek H."/>
            <person name="Erfle H."/>
            <person name="Jordan N."/>
            <person name="Bangert S."/>
            <person name="Wiedelmann R."/>
            <person name="Kranz H."/>
            <person name="Voss H."/>
            <person name="Holland R."/>
            <person name="Brandt P."/>
            <person name="Nyakatura G."/>
            <person name="Vezzi A."/>
            <person name="D'Angelo M."/>
            <person name="Pallavicini A."/>
            <person name="Toppo S."/>
            <person name="Simionati B."/>
            <person name="Conrad A."/>
            <person name="Hornischer K."/>
            <person name="Kauer G."/>
            <person name="Loehnert T.-H."/>
            <person name="Nordsiek G."/>
            <person name="Reichelt J."/>
            <person name="Scharfe M."/>
            <person name="Schoen O."/>
            <person name="Bargues M."/>
            <person name="Terol J."/>
            <person name="Climent J."/>
            <person name="Navarro P."/>
            <person name="Collado C."/>
            <person name="Perez-Perez A."/>
            <person name="Ottenwaelder B."/>
            <person name="Duchemin D."/>
            <person name="Cooke R."/>
            <person name="Laudie M."/>
            <person name="Berger-Llauro C."/>
            <person name="Purnelle B."/>
            <person name="Masuy D."/>
            <person name="de Haan M."/>
            <person name="Maarse A.C."/>
            <person name="Alcaraz J.-P."/>
            <person name="Cottet A."/>
            <person name="Casacuberta E."/>
            <person name="Monfort A."/>
            <person name="Argiriou A."/>
            <person name="Flores M."/>
            <person name="Liguori R."/>
            <person name="Vitale D."/>
            <person name="Mannhaupt G."/>
            <person name="Haase D."/>
            <person name="Schoof H."/>
            <person name="Rudd S."/>
            <person name="Zaccaria P."/>
            <person name="Mewes H.-W."/>
            <person name="Mayer K.F.X."/>
            <person name="Kaul S."/>
            <person name="Town C.D."/>
            <person name="Koo H.L."/>
            <person name="Tallon L.J."/>
            <person name="Jenkins J."/>
            <person name="Rooney T."/>
            <person name="Rizzo M."/>
            <person name="Walts A."/>
            <person name="Utterback T."/>
            <person name="Fujii C.Y."/>
            <person name="Shea T.P."/>
            <person name="Creasy T.H."/>
            <person name="Haas B."/>
            <person name="Maiti R."/>
            <person name="Wu D."/>
            <person name="Peterson J."/>
            <person name="Van Aken S."/>
            <person name="Pai G."/>
            <person name="Militscher J."/>
            <person name="Sellers P."/>
            <person name="Gill J.E."/>
            <person name="Feldblyum T.V."/>
            <person name="Preuss D."/>
            <person name="Lin X."/>
            <person name="Nierman W.C."/>
            <person name="Salzberg S.L."/>
            <person name="White O."/>
            <person name="Venter J.C."/>
            <person name="Fraser C.M."/>
            <person name="Kaneko T."/>
            <person name="Nakamura Y."/>
            <person name="Sato S."/>
            <person name="Kato T."/>
            <person name="Asamizu E."/>
            <person name="Sasamoto S."/>
            <person name="Kimura T."/>
            <person name="Idesawa K."/>
            <person name="Kawashima K."/>
            <person name="Kishida Y."/>
            <person name="Kiyokawa C."/>
            <person name="Kohara M."/>
            <person name="Matsumoto M."/>
            <person name="Matsuno A."/>
            <person name="Muraki A."/>
            <person name="Nakayama S."/>
            <person name="Nakazaki N."/>
            <person name="Shinpo S."/>
            <person name="Takeuchi C."/>
            <person name="Wada T."/>
            <person name="Watanabe A."/>
            <person name="Yamada M."/>
            <person name="Yasuda M."/>
            <person name="Tabata S."/>
        </authorList>
    </citation>
    <scope>NUCLEOTIDE SEQUENCE [LARGE SCALE GENOMIC DNA]</scope>
    <source>
        <strain>cv. Columbia</strain>
    </source>
</reference>
<reference key="2">
    <citation type="journal article" date="2017" name="Plant J.">
        <title>Araport11: a complete reannotation of the Arabidopsis thaliana reference genome.</title>
        <authorList>
            <person name="Cheng C.Y."/>
            <person name="Krishnakumar V."/>
            <person name="Chan A.P."/>
            <person name="Thibaud-Nissen F."/>
            <person name="Schobel S."/>
            <person name="Town C.D."/>
        </authorList>
    </citation>
    <scope>GENOME REANNOTATION</scope>
    <source>
        <strain>cv. Columbia</strain>
    </source>
</reference>
<reference key="3">
    <citation type="journal article" date="2002" name="Science">
        <title>Functional annotation of a full-length Arabidopsis cDNA collection.</title>
        <authorList>
            <person name="Seki M."/>
            <person name="Narusaka M."/>
            <person name="Kamiya A."/>
            <person name="Ishida J."/>
            <person name="Satou M."/>
            <person name="Sakurai T."/>
            <person name="Nakajima M."/>
            <person name="Enju A."/>
            <person name="Akiyama K."/>
            <person name="Oono Y."/>
            <person name="Muramatsu M."/>
            <person name="Hayashizaki Y."/>
            <person name="Kawai J."/>
            <person name="Carninci P."/>
            <person name="Itoh M."/>
            <person name="Ishii Y."/>
            <person name="Arakawa T."/>
            <person name="Shibata K."/>
            <person name="Shinagawa A."/>
            <person name="Shinozaki K."/>
        </authorList>
    </citation>
    <scope>NUCLEOTIDE SEQUENCE [LARGE SCALE MRNA] (ISOFORM 1)</scope>
    <source>
        <strain>cv. Columbia</strain>
    </source>
</reference>
<reference key="4">
    <citation type="journal article" date="2003" name="Science">
        <title>Empirical analysis of transcriptional activity in the Arabidopsis genome.</title>
        <authorList>
            <person name="Yamada K."/>
            <person name="Lim J."/>
            <person name="Dale J.M."/>
            <person name="Chen H."/>
            <person name="Shinn P."/>
            <person name="Palm C.J."/>
            <person name="Southwick A.M."/>
            <person name="Wu H.C."/>
            <person name="Kim C.J."/>
            <person name="Nguyen M."/>
            <person name="Pham P.K."/>
            <person name="Cheuk R.F."/>
            <person name="Karlin-Newmann G."/>
            <person name="Liu S.X."/>
            <person name="Lam B."/>
            <person name="Sakano H."/>
            <person name="Wu T."/>
            <person name="Yu G."/>
            <person name="Miranda M."/>
            <person name="Quach H.L."/>
            <person name="Tripp M."/>
            <person name="Chang C.H."/>
            <person name="Lee J.M."/>
            <person name="Toriumi M.J."/>
            <person name="Chan M.M."/>
            <person name="Tang C.C."/>
            <person name="Onodera C.S."/>
            <person name="Deng J.M."/>
            <person name="Akiyama K."/>
            <person name="Ansari Y."/>
            <person name="Arakawa T."/>
            <person name="Banh J."/>
            <person name="Banno F."/>
            <person name="Bowser L."/>
            <person name="Brooks S.Y."/>
            <person name="Carninci P."/>
            <person name="Chao Q."/>
            <person name="Choy N."/>
            <person name="Enju A."/>
            <person name="Goldsmith A.D."/>
            <person name="Gurjal M."/>
            <person name="Hansen N.F."/>
            <person name="Hayashizaki Y."/>
            <person name="Johnson-Hopson C."/>
            <person name="Hsuan V.W."/>
            <person name="Iida K."/>
            <person name="Karnes M."/>
            <person name="Khan S."/>
            <person name="Koesema E."/>
            <person name="Ishida J."/>
            <person name="Jiang P.X."/>
            <person name="Jones T."/>
            <person name="Kawai J."/>
            <person name="Kamiya A."/>
            <person name="Meyers C."/>
            <person name="Nakajima M."/>
            <person name="Narusaka M."/>
            <person name="Seki M."/>
            <person name="Sakurai T."/>
            <person name="Satou M."/>
            <person name="Tamse R."/>
            <person name="Vaysberg M."/>
            <person name="Wallender E.K."/>
            <person name="Wong C."/>
            <person name="Yamamura Y."/>
            <person name="Yuan S."/>
            <person name="Shinozaki K."/>
            <person name="Davis R.W."/>
            <person name="Theologis A."/>
            <person name="Ecker J.R."/>
        </authorList>
    </citation>
    <scope>NUCLEOTIDE SEQUENCE [LARGE SCALE MRNA] (ISOFORM 1)</scope>
    <source>
        <strain>cv. Columbia</strain>
    </source>
</reference>
<reference key="5">
    <citation type="submission" date="2002-03" db="EMBL/GenBank/DDBJ databases">
        <title>Full-length cDNA from Arabidopsis thaliana.</title>
        <authorList>
            <person name="Brover V.V."/>
            <person name="Troukhan M.E."/>
            <person name="Alexandrov N.A."/>
            <person name="Lu Y.-P."/>
            <person name="Flavell R.B."/>
            <person name="Feldmann K.A."/>
        </authorList>
    </citation>
    <scope>NUCLEOTIDE SEQUENCE [LARGE SCALE MRNA] (ISOFORM 2)</scope>
</reference>
<reference key="6">
    <citation type="journal article" date="2001" name="BMC Genomics">
        <title>Kinesins in the Arabidopsis genome: a comparative analysis among eukaryotes.</title>
        <authorList>
            <person name="Reddy A.S."/>
            <person name="Day I.S."/>
        </authorList>
    </citation>
    <scope>GENE FAMILY</scope>
</reference>
<reference key="7">
    <citation type="journal article" date="2006" name="BMC Genomics">
        <title>Comprehensive comparative analysis of kinesins in photosynthetic eukaryotes.</title>
        <authorList>
            <person name="Richardson D.N."/>
            <person name="Simmons M.P."/>
            <person name="Reddy A.S."/>
        </authorList>
    </citation>
    <scope>GENE FAMILY</scope>
    <scope>NOMENCLATURE</scope>
</reference>
<reference key="8">
    <citation type="journal article" date="2012" name="Protoplasma">
        <title>Functions of the Arabidopsis kinesin superfamily of microtubule-based motor proteins.</title>
        <authorList>
            <person name="Zhu C."/>
            <person name="Dixit R."/>
        </authorList>
    </citation>
    <scope>REVIEW</scope>
</reference>
<reference key="9">
    <citation type="journal article" date="2014" name="Plant Cell Rep.">
        <title>The Arabidopsis kinesin gene AtKin-1 plays a role in the nuclear division process during megagametogenesis.</title>
        <authorList>
            <person name="Wang H."/>
            <person name="Liu R."/>
            <person name="Wang J."/>
            <person name="Wang P."/>
            <person name="Shen Y."/>
            <person name="Liu G."/>
        </authorList>
    </citation>
    <scope>FUNCTION</scope>
    <scope>TISSUE SPECIFICITY</scope>
    <scope>DISRUPTION PHENOTYPE</scope>
</reference>
<reference key="10">
    <citation type="journal article" date="2014" name="PLoS Genet.">
        <title>The kinesin AtPSS1 promotes synapsis and is required for proper crossover distribution in meiosis.</title>
        <authorList>
            <person name="Duroc Y."/>
            <person name="Lemhemdi A."/>
            <person name="Larcheveque C."/>
            <person name="Hurel A."/>
            <person name="Cuacos M."/>
            <person name="Cromer L."/>
            <person name="Horlow C."/>
            <person name="Armstrong S.J."/>
            <person name="Chelysheva L."/>
            <person name="Mercier R."/>
        </authorList>
    </citation>
    <scope>FUNCTION</scope>
    <scope>DISRUPTION PHENOTYPE</scope>
    <scope>SUBUNIT</scope>
    <scope>INTERACTION WITH WIP1 AND WIP2</scope>
</reference>
<proteinExistence type="evidence at protein level"/>
<name>KN1_ARATH</name>
<organism>
    <name type="scientific">Arabidopsis thaliana</name>
    <name type="common">Mouse-ear cress</name>
    <dbReference type="NCBI Taxonomy" id="3702"/>
    <lineage>
        <taxon>Eukaryota</taxon>
        <taxon>Viridiplantae</taxon>
        <taxon>Streptophyta</taxon>
        <taxon>Embryophyta</taxon>
        <taxon>Tracheophyta</taxon>
        <taxon>Spermatophyta</taxon>
        <taxon>Magnoliopsida</taxon>
        <taxon>eudicotyledons</taxon>
        <taxon>Gunneridae</taxon>
        <taxon>Pentapetalae</taxon>
        <taxon>rosids</taxon>
        <taxon>malvids</taxon>
        <taxon>Brassicales</taxon>
        <taxon>Brassicaceae</taxon>
        <taxon>Camelineae</taxon>
        <taxon>Arabidopsis</taxon>
    </lineage>
</organism>
<dbReference type="EMBL" id="AL163818">
    <property type="protein sequence ID" value="CAB87801.1"/>
    <property type="status" value="ALT_SEQ"/>
    <property type="molecule type" value="Genomic_DNA"/>
</dbReference>
<dbReference type="EMBL" id="CP002686">
    <property type="protein sequence ID" value="AEE80490.1"/>
    <property type="molecule type" value="Genomic_DNA"/>
</dbReference>
<dbReference type="EMBL" id="CP002686">
    <property type="protein sequence ID" value="AEE80491.1"/>
    <property type="molecule type" value="Genomic_DNA"/>
</dbReference>
<dbReference type="EMBL" id="AK119094">
    <property type="protein sequence ID" value="BAC43667.1"/>
    <property type="molecule type" value="mRNA"/>
</dbReference>
<dbReference type="EMBL" id="BT005391">
    <property type="protein sequence ID" value="AAO63455.1"/>
    <property type="molecule type" value="mRNA"/>
</dbReference>
<dbReference type="EMBL" id="AY085419">
    <property type="protein sequence ID" value="AAM62646.1"/>
    <property type="molecule type" value="mRNA"/>
</dbReference>
<dbReference type="PIR" id="T49189">
    <property type="entry name" value="T49189"/>
</dbReference>
<dbReference type="RefSeq" id="NP_567148.1">
    <molecule id="Q8GW44-2"/>
    <property type="nucleotide sequence ID" value="NM_116213.3"/>
</dbReference>
<dbReference type="RefSeq" id="NP_850742.1">
    <molecule id="Q8GW44-1"/>
    <property type="nucleotide sequence ID" value="NM_180411.3"/>
</dbReference>
<dbReference type="SMR" id="Q8GW44"/>
<dbReference type="FunCoup" id="Q8GW44">
    <property type="interactions" value="174"/>
</dbReference>
<dbReference type="IntAct" id="Q8GW44">
    <property type="interactions" value="2"/>
</dbReference>
<dbReference type="STRING" id="3702.Q8GW44"/>
<dbReference type="iPTMnet" id="Q8GW44"/>
<dbReference type="PaxDb" id="3702-AT3G63480.1"/>
<dbReference type="ProteomicsDB" id="237060">
    <molecule id="Q8GW44-1"/>
</dbReference>
<dbReference type="EnsemblPlants" id="AT3G63480.1">
    <molecule id="Q8GW44-2"/>
    <property type="protein sequence ID" value="AT3G63480.1"/>
    <property type="gene ID" value="AT3G63480"/>
</dbReference>
<dbReference type="EnsemblPlants" id="AT3G63480.2">
    <molecule id="Q8GW44-1"/>
    <property type="protein sequence ID" value="AT3G63480.2"/>
    <property type="gene ID" value="AT3G63480"/>
</dbReference>
<dbReference type="GeneID" id="825523"/>
<dbReference type="Gramene" id="AT3G63480.1">
    <molecule id="Q8GW44-2"/>
    <property type="protein sequence ID" value="AT3G63480.1"/>
    <property type="gene ID" value="AT3G63480"/>
</dbReference>
<dbReference type="Gramene" id="AT3G63480.2">
    <molecule id="Q8GW44-1"/>
    <property type="protein sequence ID" value="AT3G63480.2"/>
    <property type="gene ID" value="AT3G63480"/>
</dbReference>
<dbReference type="KEGG" id="ath:AT3G63480"/>
<dbReference type="Araport" id="AT3G63480"/>
<dbReference type="TAIR" id="AT3G63480">
    <property type="gene designation" value="KIN-1"/>
</dbReference>
<dbReference type="eggNOG" id="KOG0240">
    <property type="taxonomic scope" value="Eukaryota"/>
</dbReference>
<dbReference type="InParanoid" id="Q8GW44"/>
<dbReference type="OMA" id="FYEDAQQ"/>
<dbReference type="PhylomeDB" id="Q8GW44"/>
<dbReference type="PRO" id="PR:Q8GW44"/>
<dbReference type="Proteomes" id="UP000006548">
    <property type="component" value="Chromosome 3"/>
</dbReference>
<dbReference type="ExpressionAtlas" id="Q8GW44">
    <property type="expression patterns" value="baseline and differential"/>
</dbReference>
<dbReference type="GO" id="GO:0005874">
    <property type="term" value="C:microtubule"/>
    <property type="evidence" value="ECO:0007669"/>
    <property type="project" value="UniProtKB-KW"/>
</dbReference>
<dbReference type="GO" id="GO:0005524">
    <property type="term" value="F:ATP binding"/>
    <property type="evidence" value="ECO:0007669"/>
    <property type="project" value="UniProtKB-KW"/>
</dbReference>
<dbReference type="GO" id="GO:0008017">
    <property type="term" value="F:microtubule binding"/>
    <property type="evidence" value="ECO:0007669"/>
    <property type="project" value="InterPro"/>
</dbReference>
<dbReference type="GO" id="GO:0003777">
    <property type="term" value="F:microtubule motor activity"/>
    <property type="evidence" value="ECO:0000304"/>
    <property type="project" value="TAIR"/>
</dbReference>
<dbReference type="GO" id="GO:0042803">
    <property type="term" value="F:protein homodimerization activity"/>
    <property type="evidence" value="ECO:0000314"/>
    <property type="project" value="UniProtKB"/>
</dbReference>
<dbReference type="GO" id="GO:0007129">
    <property type="term" value="P:homologous chromosome pairing at meiosis"/>
    <property type="evidence" value="ECO:0000315"/>
    <property type="project" value="TAIR"/>
</dbReference>
<dbReference type="GO" id="GO:0009561">
    <property type="term" value="P:megagametogenesis"/>
    <property type="evidence" value="ECO:0000315"/>
    <property type="project" value="TAIR"/>
</dbReference>
<dbReference type="GO" id="GO:0007018">
    <property type="term" value="P:microtubule-based movement"/>
    <property type="evidence" value="ECO:0007669"/>
    <property type="project" value="InterPro"/>
</dbReference>
<dbReference type="GO" id="GO:0009555">
    <property type="term" value="P:pollen development"/>
    <property type="evidence" value="ECO:0000315"/>
    <property type="project" value="UniProtKB"/>
</dbReference>
<dbReference type="GO" id="GO:0048316">
    <property type="term" value="P:seed development"/>
    <property type="evidence" value="ECO:0000315"/>
    <property type="project" value="UniProtKB"/>
</dbReference>
<dbReference type="CDD" id="cd01369">
    <property type="entry name" value="KISc_KHC_KIF5"/>
    <property type="match status" value="1"/>
</dbReference>
<dbReference type="FunFam" id="3.40.850.10:FF:000114">
    <property type="entry name" value="Kinesin-like protein"/>
    <property type="match status" value="1"/>
</dbReference>
<dbReference type="Gene3D" id="3.40.850.10">
    <property type="entry name" value="Kinesin motor domain"/>
    <property type="match status" value="1"/>
</dbReference>
<dbReference type="InterPro" id="IPR027640">
    <property type="entry name" value="Kinesin-like_fam"/>
</dbReference>
<dbReference type="InterPro" id="IPR019821">
    <property type="entry name" value="Kinesin_motor_CS"/>
</dbReference>
<dbReference type="InterPro" id="IPR001752">
    <property type="entry name" value="Kinesin_motor_dom"/>
</dbReference>
<dbReference type="InterPro" id="IPR036961">
    <property type="entry name" value="Kinesin_motor_dom_sf"/>
</dbReference>
<dbReference type="InterPro" id="IPR027417">
    <property type="entry name" value="P-loop_NTPase"/>
</dbReference>
<dbReference type="PANTHER" id="PTHR47968">
    <property type="entry name" value="CENTROMERE PROTEIN E"/>
    <property type="match status" value="1"/>
</dbReference>
<dbReference type="PANTHER" id="PTHR47968:SF17">
    <property type="entry name" value="KINESIN-LIKE PROTEIN"/>
    <property type="match status" value="1"/>
</dbReference>
<dbReference type="Pfam" id="PF00225">
    <property type="entry name" value="Kinesin"/>
    <property type="match status" value="1"/>
</dbReference>
<dbReference type="PRINTS" id="PR00380">
    <property type="entry name" value="KINESINHEAVY"/>
</dbReference>
<dbReference type="SMART" id="SM00129">
    <property type="entry name" value="KISc"/>
    <property type="match status" value="1"/>
</dbReference>
<dbReference type="SUPFAM" id="SSF52540">
    <property type="entry name" value="P-loop containing nucleoside triphosphate hydrolases"/>
    <property type="match status" value="1"/>
</dbReference>
<dbReference type="PROSITE" id="PS00411">
    <property type="entry name" value="KINESIN_MOTOR_1"/>
    <property type="match status" value="1"/>
</dbReference>
<dbReference type="PROSITE" id="PS50067">
    <property type="entry name" value="KINESIN_MOTOR_2"/>
    <property type="match status" value="1"/>
</dbReference>
<keyword id="KW-0025">Alternative splicing</keyword>
<keyword id="KW-0067">ATP-binding</keyword>
<keyword id="KW-0175">Coiled coil</keyword>
<keyword id="KW-0493">Microtubule</keyword>
<keyword id="KW-0505">Motor protein</keyword>
<keyword id="KW-0547">Nucleotide-binding</keyword>
<keyword id="KW-1185">Reference proteome</keyword>
<protein>
    <recommendedName>
        <fullName evidence="9">Kinesin-like protein KIN-1</fullName>
    </recommendedName>
    <alternativeName>
        <fullName evidence="7">AtKIN-1</fullName>
    </alternativeName>
    <alternativeName>
        <fullName evidence="8">AtPSS1</fullName>
    </alternativeName>
    <alternativeName>
        <fullName evidence="9">Pollen semi-sterility protein 1</fullName>
    </alternativeName>
</protein>
<gene>
    <name evidence="7" type="primary">KIN1</name>
    <name evidence="8" type="synonym">PSS1</name>
    <name evidence="10" type="ordered locus">At3g63480</name>
    <name evidence="11" type="ORF">MAA21_110</name>
</gene>